<comment type="catalytic activity">
    <reaction evidence="1">
        <text>(2R)-3-phosphoglycerate + ATP = (2R)-3-phospho-glyceroyl phosphate + ADP</text>
        <dbReference type="Rhea" id="RHEA:14801"/>
        <dbReference type="ChEBI" id="CHEBI:30616"/>
        <dbReference type="ChEBI" id="CHEBI:57604"/>
        <dbReference type="ChEBI" id="CHEBI:58272"/>
        <dbReference type="ChEBI" id="CHEBI:456216"/>
        <dbReference type="EC" id="2.7.2.3"/>
    </reaction>
</comment>
<comment type="pathway">
    <text evidence="1">Carbohydrate degradation; glycolysis; pyruvate from D-glyceraldehyde 3-phosphate: step 2/5.</text>
</comment>
<comment type="subunit">
    <text evidence="1">Monomer.</text>
</comment>
<comment type="subcellular location">
    <subcellularLocation>
        <location evidence="1">Cytoplasm</location>
    </subcellularLocation>
</comment>
<comment type="similarity">
    <text evidence="1">Belongs to the phosphoglycerate kinase family.</text>
</comment>
<keyword id="KW-0067">ATP-binding</keyword>
<keyword id="KW-0963">Cytoplasm</keyword>
<keyword id="KW-0324">Glycolysis</keyword>
<keyword id="KW-0418">Kinase</keyword>
<keyword id="KW-0547">Nucleotide-binding</keyword>
<keyword id="KW-0808">Transferase</keyword>
<evidence type="ECO:0000255" key="1">
    <source>
        <dbReference type="HAMAP-Rule" id="MF_00145"/>
    </source>
</evidence>
<dbReference type="EC" id="2.7.2.3" evidence="1"/>
<dbReference type="EMBL" id="CP000056">
    <property type="protein sequence ID" value="AAX72701.1"/>
    <property type="molecule type" value="Genomic_DNA"/>
</dbReference>
<dbReference type="RefSeq" id="WP_011054985.1">
    <property type="nucleotide sequence ID" value="NC_007296.2"/>
</dbReference>
<dbReference type="SMR" id="Q48RF9"/>
<dbReference type="KEGG" id="spb:M28_Spy1591"/>
<dbReference type="HOGENOM" id="CLU_025427_0_1_9"/>
<dbReference type="UniPathway" id="UPA00109">
    <property type="reaction ID" value="UER00185"/>
</dbReference>
<dbReference type="GO" id="GO:0005829">
    <property type="term" value="C:cytosol"/>
    <property type="evidence" value="ECO:0007669"/>
    <property type="project" value="TreeGrafter"/>
</dbReference>
<dbReference type="GO" id="GO:0043531">
    <property type="term" value="F:ADP binding"/>
    <property type="evidence" value="ECO:0007669"/>
    <property type="project" value="TreeGrafter"/>
</dbReference>
<dbReference type="GO" id="GO:0005524">
    <property type="term" value="F:ATP binding"/>
    <property type="evidence" value="ECO:0007669"/>
    <property type="project" value="UniProtKB-KW"/>
</dbReference>
<dbReference type="GO" id="GO:0004618">
    <property type="term" value="F:phosphoglycerate kinase activity"/>
    <property type="evidence" value="ECO:0007669"/>
    <property type="project" value="UniProtKB-UniRule"/>
</dbReference>
<dbReference type="GO" id="GO:0006094">
    <property type="term" value="P:gluconeogenesis"/>
    <property type="evidence" value="ECO:0007669"/>
    <property type="project" value="TreeGrafter"/>
</dbReference>
<dbReference type="GO" id="GO:0006096">
    <property type="term" value="P:glycolytic process"/>
    <property type="evidence" value="ECO:0007669"/>
    <property type="project" value="UniProtKB-UniRule"/>
</dbReference>
<dbReference type="FunFam" id="3.40.50.1260:FF:000001">
    <property type="entry name" value="Phosphoglycerate kinase"/>
    <property type="match status" value="1"/>
</dbReference>
<dbReference type="FunFam" id="3.40.50.1260:FF:000008">
    <property type="entry name" value="Phosphoglycerate kinase"/>
    <property type="match status" value="1"/>
</dbReference>
<dbReference type="Gene3D" id="3.40.50.1260">
    <property type="entry name" value="Phosphoglycerate kinase, N-terminal domain"/>
    <property type="match status" value="2"/>
</dbReference>
<dbReference type="HAMAP" id="MF_00145">
    <property type="entry name" value="Phosphoglyc_kinase"/>
    <property type="match status" value="1"/>
</dbReference>
<dbReference type="InterPro" id="IPR001576">
    <property type="entry name" value="Phosphoglycerate_kinase"/>
</dbReference>
<dbReference type="InterPro" id="IPR015911">
    <property type="entry name" value="Phosphoglycerate_kinase_CS"/>
</dbReference>
<dbReference type="InterPro" id="IPR015824">
    <property type="entry name" value="Phosphoglycerate_kinase_N"/>
</dbReference>
<dbReference type="InterPro" id="IPR036043">
    <property type="entry name" value="Phosphoglycerate_kinase_sf"/>
</dbReference>
<dbReference type="PANTHER" id="PTHR11406">
    <property type="entry name" value="PHOSPHOGLYCERATE KINASE"/>
    <property type="match status" value="1"/>
</dbReference>
<dbReference type="PANTHER" id="PTHR11406:SF23">
    <property type="entry name" value="PHOSPHOGLYCERATE KINASE 1, CHLOROPLASTIC-RELATED"/>
    <property type="match status" value="1"/>
</dbReference>
<dbReference type="Pfam" id="PF00162">
    <property type="entry name" value="PGK"/>
    <property type="match status" value="1"/>
</dbReference>
<dbReference type="PIRSF" id="PIRSF000724">
    <property type="entry name" value="Pgk"/>
    <property type="match status" value="1"/>
</dbReference>
<dbReference type="PRINTS" id="PR00477">
    <property type="entry name" value="PHGLYCKINASE"/>
</dbReference>
<dbReference type="SUPFAM" id="SSF53748">
    <property type="entry name" value="Phosphoglycerate kinase"/>
    <property type="match status" value="1"/>
</dbReference>
<dbReference type="PROSITE" id="PS00111">
    <property type="entry name" value="PGLYCERATE_KINASE"/>
    <property type="match status" value="1"/>
</dbReference>
<accession>Q48RF9</accession>
<name>PGK_STRPM</name>
<feature type="chain" id="PRO_1000009659" description="Phosphoglycerate kinase">
    <location>
        <begin position="1"/>
        <end position="398"/>
    </location>
</feature>
<feature type="binding site" evidence="1">
    <location>
        <begin position="21"/>
        <end position="23"/>
    </location>
    <ligand>
        <name>substrate</name>
    </ligand>
</feature>
<feature type="binding site" evidence="1">
    <location>
        <position position="36"/>
    </location>
    <ligand>
        <name>substrate</name>
    </ligand>
</feature>
<feature type="binding site" evidence="1">
    <location>
        <begin position="59"/>
        <end position="62"/>
    </location>
    <ligand>
        <name>substrate</name>
    </ligand>
</feature>
<feature type="binding site" evidence="1">
    <location>
        <position position="119"/>
    </location>
    <ligand>
        <name>substrate</name>
    </ligand>
</feature>
<feature type="binding site" evidence="1">
    <location>
        <position position="157"/>
    </location>
    <ligand>
        <name>substrate</name>
    </ligand>
</feature>
<feature type="binding site" evidence="1">
    <location>
        <position position="208"/>
    </location>
    <ligand>
        <name>ATP</name>
        <dbReference type="ChEBI" id="CHEBI:30616"/>
    </ligand>
</feature>
<feature type="binding site" evidence="1">
    <location>
        <position position="296"/>
    </location>
    <ligand>
        <name>ATP</name>
        <dbReference type="ChEBI" id="CHEBI:30616"/>
    </ligand>
</feature>
<feature type="binding site" evidence="1">
    <location>
        <position position="327"/>
    </location>
    <ligand>
        <name>ATP</name>
        <dbReference type="ChEBI" id="CHEBI:30616"/>
    </ligand>
</feature>
<feature type="binding site" evidence="1">
    <location>
        <begin position="354"/>
        <end position="357"/>
    </location>
    <ligand>
        <name>ATP</name>
        <dbReference type="ChEBI" id="CHEBI:30616"/>
    </ligand>
</feature>
<sequence>MAKLTVKDVDLKGKKVLVRVDFNVPLKDGVITNDNRITAALPTIKYIIEQGGRAILFSHLGRVKEEADKEGKSLAPVAADLAAKLGQDVVFPGVTRGSKLEEAINALEDGQVLLVENTRFEDVDGKKESKNDEELGKYWASLGDGIFVNDAFGTAHRAHASNVGISANVEKAVAGFLLENEIAYIQEAVETPERPFVAILGGSKVSDKIGVIENLLEKADKVLIGGGMTYTFYKAQGIEIGNSLVEEDKLDVAKDLLEKSNGKLILPVDSKEANAFAGYTEVRDTEGEAVSEGFLGLDIGPKSIAKFDEALTGAKTVVWNGPMGVFENPDFQAGTIGVMDAIVKQPGVKSIIGGGDSAAAAINLGRADKFSWISTGGGASMELLEGKVLPGLAALTEK</sequence>
<reference key="1">
    <citation type="journal article" date="2005" name="J. Infect. Dis.">
        <title>Genome sequence of a serotype M28 strain of group A Streptococcus: potential new insights into puerperal sepsis and bacterial disease specificity.</title>
        <authorList>
            <person name="Green N.M."/>
            <person name="Zhang S."/>
            <person name="Porcella S.F."/>
            <person name="Nagiec M.J."/>
            <person name="Barbian K.D."/>
            <person name="Beres S.B."/>
            <person name="Lefebvre R.B."/>
            <person name="Musser J.M."/>
        </authorList>
    </citation>
    <scope>NUCLEOTIDE SEQUENCE [LARGE SCALE GENOMIC DNA]</scope>
    <source>
        <strain>MGAS6180</strain>
    </source>
</reference>
<protein>
    <recommendedName>
        <fullName evidence="1">Phosphoglycerate kinase</fullName>
        <ecNumber evidence="1">2.7.2.3</ecNumber>
    </recommendedName>
</protein>
<gene>
    <name evidence="1" type="primary">pgk</name>
    <name type="ordered locus">M28_Spy1591</name>
</gene>
<proteinExistence type="inferred from homology"/>
<organism>
    <name type="scientific">Streptococcus pyogenes serotype M28 (strain MGAS6180)</name>
    <dbReference type="NCBI Taxonomy" id="319701"/>
    <lineage>
        <taxon>Bacteria</taxon>
        <taxon>Bacillati</taxon>
        <taxon>Bacillota</taxon>
        <taxon>Bacilli</taxon>
        <taxon>Lactobacillales</taxon>
        <taxon>Streptococcaceae</taxon>
        <taxon>Streptococcus</taxon>
    </lineage>
</organism>